<comment type="similarity">
    <text evidence="1">Belongs to the bacterial ribosomal protein bL28 family.</text>
</comment>
<accession>Q2GKY5</accession>
<organism>
    <name type="scientific">Anaplasma phagocytophilum (strain HZ)</name>
    <dbReference type="NCBI Taxonomy" id="212042"/>
    <lineage>
        <taxon>Bacteria</taxon>
        <taxon>Pseudomonadati</taxon>
        <taxon>Pseudomonadota</taxon>
        <taxon>Alphaproteobacteria</taxon>
        <taxon>Rickettsiales</taxon>
        <taxon>Anaplasmataceae</taxon>
        <taxon>Anaplasma</taxon>
        <taxon>phagocytophilum group</taxon>
    </lineage>
</organism>
<reference key="1">
    <citation type="journal article" date="2006" name="PLoS Genet.">
        <title>Comparative genomics of emerging human ehrlichiosis agents.</title>
        <authorList>
            <person name="Dunning Hotopp J.C."/>
            <person name="Lin M."/>
            <person name="Madupu R."/>
            <person name="Crabtree J."/>
            <person name="Angiuoli S.V."/>
            <person name="Eisen J.A."/>
            <person name="Seshadri R."/>
            <person name="Ren Q."/>
            <person name="Wu M."/>
            <person name="Utterback T.R."/>
            <person name="Smith S."/>
            <person name="Lewis M."/>
            <person name="Khouri H."/>
            <person name="Zhang C."/>
            <person name="Niu H."/>
            <person name="Lin Q."/>
            <person name="Ohashi N."/>
            <person name="Zhi N."/>
            <person name="Nelson W.C."/>
            <person name="Brinkac L.M."/>
            <person name="Dodson R.J."/>
            <person name="Rosovitz M.J."/>
            <person name="Sundaram J.P."/>
            <person name="Daugherty S.C."/>
            <person name="Davidsen T."/>
            <person name="Durkin A.S."/>
            <person name="Gwinn M.L."/>
            <person name="Haft D.H."/>
            <person name="Selengut J.D."/>
            <person name="Sullivan S.A."/>
            <person name="Zafar N."/>
            <person name="Zhou L."/>
            <person name="Benahmed F."/>
            <person name="Forberger H."/>
            <person name="Halpin R."/>
            <person name="Mulligan S."/>
            <person name="Robinson J."/>
            <person name="White O."/>
            <person name="Rikihisa Y."/>
            <person name="Tettelin H."/>
        </authorList>
    </citation>
    <scope>NUCLEOTIDE SEQUENCE [LARGE SCALE GENOMIC DNA]</scope>
    <source>
        <strain>HZ</strain>
    </source>
</reference>
<protein>
    <recommendedName>
        <fullName evidence="1">Large ribosomal subunit protein bL28</fullName>
    </recommendedName>
    <alternativeName>
        <fullName evidence="2">50S ribosomal protein L28</fullName>
    </alternativeName>
</protein>
<gene>
    <name evidence="1" type="primary">rpmB</name>
    <name type="ordered locus">APH_0359</name>
</gene>
<feature type="chain" id="PRO_1000007164" description="Large ribosomal subunit protein bL28">
    <location>
        <begin position="1"/>
        <end position="103"/>
    </location>
</feature>
<sequence>MSRVCDITGASKSFGNKVSHSNRKTKRSYLVNLHNVTLVSEVLGRKFRVKVASRTLRTIDYKGGLDLYLLNTSSRKLTEVARKIKRKIKVAIATGKSKQSDNI</sequence>
<dbReference type="EMBL" id="CP000235">
    <property type="protein sequence ID" value="ABD43951.1"/>
    <property type="molecule type" value="Genomic_DNA"/>
</dbReference>
<dbReference type="RefSeq" id="WP_011450489.1">
    <property type="nucleotide sequence ID" value="NC_007797.1"/>
</dbReference>
<dbReference type="SMR" id="Q2GKY5"/>
<dbReference type="STRING" id="212042.APH_0359"/>
<dbReference type="PaxDb" id="212042-APH_0359"/>
<dbReference type="EnsemblBacteria" id="ABD43951">
    <property type="protein sequence ID" value="ABD43951"/>
    <property type="gene ID" value="APH_0359"/>
</dbReference>
<dbReference type="GeneID" id="92747455"/>
<dbReference type="KEGG" id="aph:APH_0359"/>
<dbReference type="eggNOG" id="COG0227">
    <property type="taxonomic scope" value="Bacteria"/>
</dbReference>
<dbReference type="HOGENOM" id="CLU_064548_4_2_5"/>
<dbReference type="Proteomes" id="UP000001943">
    <property type="component" value="Chromosome"/>
</dbReference>
<dbReference type="GO" id="GO:1990904">
    <property type="term" value="C:ribonucleoprotein complex"/>
    <property type="evidence" value="ECO:0007669"/>
    <property type="project" value="UniProtKB-KW"/>
</dbReference>
<dbReference type="GO" id="GO:0005840">
    <property type="term" value="C:ribosome"/>
    <property type="evidence" value="ECO:0007669"/>
    <property type="project" value="UniProtKB-KW"/>
</dbReference>
<dbReference type="GO" id="GO:0003735">
    <property type="term" value="F:structural constituent of ribosome"/>
    <property type="evidence" value="ECO:0007669"/>
    <property type="project" value="InterPro"/>
</dbReference>
<dbReference type="GO" id="GO:0006412">
    <property type="term" value="P:translation"/>
    <property type="evidence" value="ECO:0007669"/>
    <property type="project" value="UniProtKB-UniRule"/>
</dbReference>
<dbReference type="Gene3D" id="2.30.170.40">
    <property type="entry name" value="Ribosomal protein L28/L24"/>
    <property type="match status" value="1"/>
</dbReference>
<dbReference type="HAMAP" id="MF_00373">
    <property type="entry name" value="Ribosomal_bL28"/>
    <property type="match status" value="1"/>
</dbReference>
<dbReference type="InterPro" id="IPR026569">
    <property type="entry name" value="Ribosomal_bL28"/>
</dbReference>
<dbReference type="InterPro" id="IPR034704">
    <property type="entry name" value="Ribosomal_bL28/bL31-like_sf"/>
</dbReference>
<dbReference type="InterPro" id="IPR001383">
    <property type="entry name" value="Ribosomal_bL28_bact-type"/>
</dbReference>
<dbReference type="InterPro" id="IPR037147">
    <property type="entry name" value="Ribosomal_bL28_sf"/>
</dbReference>
<dbReference type="NCBIfam" id="TIGR00009">
    <property type="entry name" value="L28"/>
    <property type="match status" value="1"/>
</dbReference>
<dbReference type="PANTHER" id="PTHR13528">
    <property type="entry name" value="39S RIBOSOMAL PROTEIN L28, MITOCHONDRIAL"/>
    <property type="match status" value="1"/>
</dbReference>
<dbReference type="PANTHER" id="PTHR13528:SF2">
    <property type="entry name" value="LARGE RIBOSOMAL SUBUNIT PROTEIN BL28M"/>
    <property type="match status" value="1"/>
</dbReference>
<dbReference type="Pfam" id="PF00830">
    <property type="entry name" value="Ribosomal_L28"/>
    <property type="match status" value="1"/>
</dbReference>
<dbReference type="SUPFAM" id="SSF143800">
    <property type="entry name" value="L28p-like"/>
    <property type="match status" value="1"/>
</dbReference>
<proteinExistence type="inferred from homology"/>
<evidence type="ECO:0000255" key="1">
    <source>
        <dbReference type="HAMAP-Rule" id="MF_00373"/>
    </source>
</evidence>
<evidence type="ECO:0000305" key="2"/>
<keyword id="KW-0687">Ribonucleoprotein</keyword>
<keyword id="KW-0689">Ribosomal protein</keyword>
<name>RL28_ANAPZ</name>